<accession>A1W1W9</accession>
<keyword id="KW-0028">Amino-acid biosynthesis</keyword>
<keyword id="KW-0100">Branched-chain amino acid biosynthesis</keyword>
<keyword id="KW-0432">Leucine biosynthesis</keyword>
<keyword id="KW-0456">Lyase</keyword>
<evidence type="ECO:0000255" key="1">
    <source>
        <dbReference type="HAMAP-Rule" id="MF_01031"/>
    </source>
</evidence>
<gene>
    <name evidence="1" type="primary">leuD</name>
    <name type="ordered locus">CJJ81176_0014</name>
</gene>
<dbReference type="EC" id="4.2.1.33" evidence="1"/>
<dbReference type="EMBL" id="CP000538">
    <property type="protein sequence ID" value="EAQ71941.1"/>
    <property type="molecule type" value="Genomic_DNA"/>
</dbReference>
<dbReference type="RefSeq" id="WP_002868998.1">
    <property type="nucleotide sequence ID" value="NC_008787.1"/>
</dbReference>
<dbReference type="SMR" id="A1W1W9"/>
<dbReference type="KEGG" id="cjj:CJJ81176_0014"/>
<dbReference type="eggNOG" id="COG0066">
    <property type="taxonomic scope" value="Bacteria"/>
</dbReference>
<dbReference type="HOGENOM" id="CLU_081378_0_3_7"/>
<dbReference type="UniPathway" id="UPA00048">
    <property type="reaction ID" value="UER00071"/>
</dbReference>
<dbReference type="Proteomes" id="UP000000646">
    <property type="component" value="Chromosome"/>
</dbReference>
<dbReference type="GO" id="GO:0009316">
    <property type="term" value="C:3-isopropylmalate dehydratase complex"/>
    <property type="evidence" value="ECO:0007669"/>
    <property type="project" value="InterPro"/>
</dbReference>
<dbReference type="GO" id="GO:0003861">
    <property type="term" value="F:3-isopropylmalate dehydratase activity"/>
    <property type="evidence" value="ECO:0007669"/>
    <property type="project" value="UniProtKB-UniRule"/>
</dbReference>
<dbReference type="GO" id="GO:0009098">
    <property type="term" value="P:L-leucine biosynthetic process"/>
    <property type="evidence" value="ECO:0007669"/>
    <property type="project" value="UniProtKB-UniRule"/>
</dbReference>
<dbReference type="CDD" id="cd01577">
    <property type="entry name" value="IPMI_Swivel"/>
    <property type="match status" value="1"/>
</dbReference>
<dbReference type="FunFam" id="3.20.19.10:FF:000003">
    <property type="entry name" value="3-isopropylmalate dehydratase small subunit"/>
    <property type="match status" value="1"/>
</dbReference>
<dbReference type="Gene3D" id="3.20.19.10">
    <property type="entry name" value="Aconitase, domain 4"/>
    <property type="match status" value="1"/>
</dbReference>
<dbReference type="HAMAP" id="MF_01031">
    <property type="entry name" value="LeuD_type1"/>
    <property type="match status" value="1"/>
</dbReference>
<dbReference type="InterPro" id="IPR004431">
    <property type="entry name" value="3-IsopropMal_deHydase_ssu"/>
</dbReference>
<dbReference type="InterPro" id="IPR015928">
    <property type="entry name" value="Aconitase/3IPM_dehydase_swvl"/>
</dbReference>
<dbReference type="InterPro" id="IPR000573">
    <property type="entry name" value="AconitaseA/IPMdHydase_ssu_swvl"/>
</dbReference>
<dbReference type="InterPro" id="IPR033940">
    <property type="entry name" value="IPMI_Swivel"/>
</dbReference>
<dbReference type="InterPro" id="IPR050075">
    <property type="entry name" value="LeuD"/>
</dbReference>
<dbReference type="NCBIfam" id="TIGR00171">
    <property type="entry name" value="leuD"/>
    <property type="match status" value="1"/>
</dbReference>
<dbReference type="NCBIfam" id="NF002458">
    <property type="entry name" value="PRK01641.1"/>
    <property type="match status" value="1"/>
</dbReference>
<dbReference type="PANTHER" id="PTHR43345:SF5">
    <property type="entry name" value="3-ISOPROPYLMALATE DEHYDRATASE SMALL SUBUNIT"/>
    <property type="match status" value="1"/>
</dbReference>
<dbReference type="PANTHER" id="PTHR43345">
    <property type="entry name" value="3-ISOPROPYLMALATE DEHYDRATASE SMALL SUBUNIT 2-RELATED-RELATED"/>
    <property type="match status" value="1"/>
</dbReference>
<dbReference type="Pfam" id="PF00694">
    <property type="entry name" value="Aconitase_C"/>
    <property type="match status" value="1"/>
</dbReference>
<dbReference type="SUPFAM" id="SSF52016">
    <property type="entry name" value="LeuD/IlvD-like"/>
    <property type="match status" value="1"/>
</dbReference>
<organism>
    <name type="scientific">Campylobacter jejuni subsp. jejuni serotype O:23/36 (strain 81-176)</name>
    <dbReference type="NCBI Taxonomy" id="354242"/>
    <lineage>
        <taxon>Bacteria</taxon>
        <taxon>Pseudomonadati</taxon>
        <taxon>Campylobacterota</taxon>
        <taxon>Epsilonproteobacteria</taxon>
        <taxon>Campylobacterales</taxon>
        <taxon>Campylobacteraceae</taxon>
        <taxon>Campylobacter</taxon>
    </lineage>
</organism>
<name>LEUD_CAMJJ</name>
<reference key="1">
    <citation type="submission" date="2006-12" db="EMBL/GenBank/DDBJ databases">
        <authorList>
            <person name="Fouts D.E."/>
            <person name="Nelson K.E."/>
            <person name="Sebastian Y."/>
        </authorList>
    </citation>
    <scope>NUCLEOTIDE SEQUENCE [LARGE SCALE GENOMIC DNA]</scope>
    <source>
        <strain>81-176</strain>
    </source>
</reference>
<feature type="chain" id="PRO_1000063749" description="3-isopropylmalate dehydratase small subunit">
    <location>
        <begin position="1"/>
        <end position="200"/>
    </location>
</feature>
<proteinExistence type="inferred from homology"/>
<protein>
    <recommendedName>
        <fullName evidence="1">3-isopropylmalate dehydratase small subunit</fullName>
        <ecNumber evidence="1">4.2.1.33</ecNumber>
    </recommendedName>
    <alternativeName>
        <fullName evidence="1">Alpha-IPM isomerase</fullName>
        <shortName evidence="1">IPMI</shortName>
    </alternativeName>
    <alternativeName>
        <fullName evidence="1">Isopropylmalate isomerase</fullName>
    </alternativeName>
</protein>
<comment type="function">
    <text evidence="1">Catalyzes the isomerization between 2-isopropylmalate and 3-isopropylmalate, via the formation of 2-isopropylmaleate.</text>
</comment>
<comment type="catalytic activity">
    <reaction evidence="1">
        <text>(2R,3S)-3-isopropylmalate = (2S)-2-isopropylmalate</text>
        <dbReference type="Rhea" id="RHEA:32287"/>
        <dbReference type="ChEBI" id="CHEBI:1178"/>
        <dbReference type="ChEBI" id="CHEBI:35121"/>
        <dbReference type="EC" id="4.2.1.33"/>
    </reaction>
</comment>
<comment type="pathway">
    <text evidence="1">Amino-acid biosynthesis; L-leucine biosynthesis; L-leucine from 3-methyl-2-oxobutanoate: step 2/4.</text>
</comment>
<comment type="subunit">
    <text evidence="1">Heterodimer of LeuC and LeuD.</text>
</comment>
<comment type="similarity">
    <text evidence="1">Belongs to the LeuD family. LeuD type 1 subfamily.</text>
</comment>
<sequence>MQKFIIHKGIACPLEYANIDTDQIIPKQFLLAVSKQGFGKHLFHDLRYLDDKESVLNMDFNLNKKEYQNSSILVSFENFGSGSSREHAPWALVDYGIRAIIAPSFADIFKNNALGNGLLTIELAKDEVLGIVDELKKSQDKNIEISLLEKRVFFKDKIFSFDLDDFHRICLLEGLDNIALTLKHEAQIKAYEKNSKSFLV</sequence>